<proteinExistence type="evidence at protein level"/>
<feature type="chain" id="PRO_0000325893" description="Cytosolic arginine sensor for mTORC1 subunit 2">
    <location>
        <begin position="1"/>
        <end position="329"/>
    </location>
</feature>
<feature type="domain" description="ACT 1">
    <location>
        <begin position="72"/>
        <end position="140"/>
    </location>
</feature>
<feature type="domain" description="ACT 2">
    <location>
        <begin position="262"/>
        <end position="322"/>
    </location>
</feature>
<feature type="sequence conflict" description="In Ref. 1; CAC14178." evidence="2" ref="1">
    <original>V</original>
    <variation>VV</variation>
    <location>
        <position position="15"/>
    </location>
</feature>
<feature type="sequence conflict" description="In Ref. 2; BAC34889." evidence="2" ref="2">
    <original>D</original>
    <variation>H</variation>
    <location>
        <position position="56"/>
    </location>
</feature>
<feature type="sequence conflict" description="In Ref. 2; BAC34889." evidence="2" ref="2">
    <original>S</original>
    <variation>T</variation>
    <location>
        <position position="70"/>
    </location>
</feature>
<feature type="sequence conflict" description="In Ref. 2; BAC34889." evidence="2" ref="2">
    <original>W</original>
    <variation>C</variation>
    <location>
        <position position="76"/>
    </location>
</feature>
<feature type="sequence conflict" description="In Ref. 2; BAC34889." evidence="2" ref="2">
    <original>F</original>
    <variation>L</variation>
    <location>
        <position position="143"/>
    </location>
</feature>
<name>CAST2_MOUSE</name>
<protein>
    <recommendedName>
        <fullName evidence="1">Cytosolic arginine sensor for mTORC1 subunit 2</fullName>
    </recommendedName>
    <alternativeName>
        <fullName evidence="2">GATS-like protein 2</fullName>
    </alternativeName>
</protein>
<evidence type="ECO:0000250" key="1">
    <source>
        <dbReference type="UniProtKB" id="A6NHX0"/>
    </source>
</evidence>
<evidence type="ECO:0000305" key="2"/>
<evidence type="ECO:0000312" key="3">
    <source>
        <dbReference type="MGI" id="MGI:1933384"/>
    </source>
</evidence>
<dbReference type="EMBL" id="AJ296173">
    <property type="protein sequence ID" value="CAC14178.1"/>
    <property type="molecule type" value="mRNA"/>
</dbReference>
<dbReference type="EMBL" id="AK039122">
    <property type="protein sequence ID" value="BAC30244.1"/>
    <property type="molecule type" value="mRNA"/>
</dbReference>
<dbReference type="EMBL" id="AK052217">
    <property type="protein sequence ID" value="BAC34889.1"/>
    <property type="molecule type" value="mRNA"/>
</dbReference>
<dbReference type="EMBL" id="BC094613">
    <property type="protein sequence ID" value="AAH94613.1"/>
    <property type="molecule type" value="mRNA"/>
</dbReference>
<dbReference type="CCDS" id="CCDS19717.1"/>
<dbReference type="RefSeq" id="NP_109644.2">
    <property type="nucleotide sequence ID" value="NM_030719.3"/>
</dbReference>
<dbReference type="SMR" id="Q8CAB8"/>
<dbReference type="FunCoup" id="Q8CAB8">
    <property type="interactions" value="159"/>
</dbReference>
<dbReference type="STRING" id="10090.ENSMUSP00000016088"/>
<dbReference type="PhosphoSitePlus" id="Q8CAB8"/>
<dbReference type="SwissPalm" id="Q8CAB8"/>
<dbReference type="PaxDb" id="10090-ENSMUSP00000016088"/>
<dbReference type="PeptideAtlas" id="Q8CAB8"/>
<dbReference type="ProteomicsDB" id="283679"/>
<dbReference type="Pumba" id="Q8CAB8"/>
<dbReference type="Antibodypedia" id="74738">
    <property type="antibodies" value="35 antibodies from 8 providers"/>
</dbReference>
<dbReference type="Ensembl" id="ENSMUST00000016088.9">
    <property type="protein sequence ID" value="ENSMUSP00000016088.9"/>
    <property type="gene ID" value="ENSMUSG00000015944.10"/>
</dbReference>
<dbReference type="GeneID" id="80909"/>
<dbReference type="KEGG" id="mmu:80909"/>
<dbReference type="UCSC" id="uc008zva.1">
    <property type="organism name" value="mouse"/>
</dbReference>
<dbReference type="AGR" id="MGI:1933384"/>
<dbReference type="CTD" id="729438"/>
<dbReference type="MGI" id="MGI:1933384">
    <property type="gene designation" value="Castor2"/>
</dbReference>
<dbReference type="VEuPathDB" id="HostDB:ENSMUSG00000015944"/>
<dbReference type="eggNOG" id="ENOG502QV83">
    <property type="taxonomic scope" value="Eukaryota"/>
</dbReference>
<dbReference type="GeneTree" id="ENSGT00390000006208"/>
<dbReference type="HOGENOM" id="CLU_057799_0_0_1"/>
<dbReference type="InParanoid" id="Q8CAB8"/>
<dbReference type="OMA" id="NEECGHI"/>
<dbReference type="OrthoDB" id="58529at2759"/>
<dbReference type="PhylomeDB" id="Q8CAB8"/>
<dbReference type="TreeFam" id="TF331648"/>
<dbReference type="Reactome" id="R-MMU-9639288">
    <property type="pathway name" value="Amino acids regulate mTORC1"/>
</dbReference>
<dbReference type="BioGRID-ORCS" id="80909">
    <property type="hits" value="1 hit in 80 CRISPR screens"/>
</dbReference>
<dbReference type="ChiTaRS" id="Gatsl2">
    <property type="organism name" value="mouse"/>
</dbReference>
<dbReference type="PRO" id="PR:Q8CAB8"/>
<dbReference type="Proteomes" id="UP000000589">
    <property type="component" value="Chromosome 5"/>
</dbReference>
<dbReference type="RNAct" id="Q8CAB8">
    <property type="molecule type" value="protein"/>
</dbReference>
<dbReference type="Bgee" id="ENSMUSG00000015944">
    <property type="expression patterns" value="Expressed in superior colliculus and 238 other cell types or tissues"/>
</dbReference>
<dbReference type="GO" id="GO:0005829">
    <property type="term" value="C:cytosol"/>
    <property type="evidence" value="ECO:0000250"/>
    <property type="project" value="UniProtKB"/>
</dbReference>
<dbReference type="GO" id="GO:0061700">
    <property type="term" value="C:GATOR2 complex"/>
    <property type="evidence" value="ECO:0007669"/>
    <property type="project" value="Ensembl"/>
</dbReference>
<dbReference type="GO" id="GO:0042802">
    <property type="term" value="F:identical protein binding"/>
    <property type="evidence" value="ECO:0007669"/>
    <property type="project" value="Ensembl"/>
</dbReference>
<dbReference type="GO" id="GO:1904262">
    <property type="term" value="P:negative regulation of TORC1 signaling"/>
    <property type="evidence" value="ECO:0000250"/>
    <property type="project" value="UniProtKB"/>
</dbReference>
<dbReference type="FunFam" id="3.30.2130.10:FF:000003">
    <property type="entry name" value="Cytosolic arginine sensor for mTORC1 subunit 1"/>
    <property type="match status" value="1"/>
</dbReference>
<dbReference type="FunFam" id="3.30.2130.10:FF:000004">
    <property type="entry name" value="Cytosolic arginine sensor for mTORC1 subunit 1"/>
    <property type="match status" value="1"/>
</dbReference>
<dbReference type="Gene3D" id="3.30.2130.10">
    <property type="entry name" value="VC0802-like"/>
    <property type="match status" value="2"/>
</dbReference>
<dbReference type="InterPro" id="IPR045865">
    <property type="entry name" value="ACT-like_dom_sf"/>
</dbReference>
<dbReference type="InterPro" id="IPR049479">
    <property type="entry name" value="CASTOR1_ACT-like"/>
</dbReference>
<dbReference type="InterPro" id="IPR040778">
    <property type="entry name" value="CASTOR1_N"/>
</dbReference>
<dbReference type="InterPro" id="IPR027795">
    <property type="entry name" value="CASTOR_ACT_dom"/>
</dbReference>
<dbReference type="InterPro" id="IPR026249">
    <property type="entry name" value="CASTOR_fam"/>
</dbReference>
<dbReference type="InterPro" id="IPR051719">
    <property type="entry name" value="CASTOR_mTORC1"/>
</dbReference>
<dbReference type="PANTHER" id="PTHR31131">
    <property type="entry name" value="CHROMOSOME 1, WHOLE GENOME SHOTGUN SEQUENCE"/>
    <property type="match status" value="1"/>
</dbReference>
<dbReference type="PANTHER" id="PTHR31131:SF2">
    <property type="entry name" value="CYTOSOLIC ARGININE SENSOR FOR MTORC1 SUBUNIT 2"/>
    <property type="match status" value="1"/>
</dbReference>
<dbReference type="Pfam" id="PF13840">
    <property type="entry name" value="ACT_7"/>
    <property type="match status" value="2"/>
</dbReference>
<dbReference type="Pfam" id="PF21389">
    <property type="entry name" value="CASTOR1_ACT-like"/>
    <property type="match status" value="1"/>
</dbReference>
<dbReference type="Pfam" id="PF18700">
    <property type="entry name" value="Castor1_N"/>
    <property type="match status" value="1"/>
</dbReference>
<dbReference type="PRINTS" id="PR02078">
    <property type="entry name" value="GATSLIKEFMLY"/>
</dbReference>
<dbReference type="SUPFAM" id="SSF55021">
    <property type="entry name" value="ACT-like"/>
    <property type="match status" value="2"/>
</dbReference>
<comment type="function">
    <text evidence="1">Functions as a negative regulator of the TORC1 signaling pathway through the GATOR complex. As part of homodimers or heterodimers with CASTOR1, directly binds and inhibits the GATOR subcomplex GATOR2 and thereby mTORC1. Does not directly bind arginine, but binding of arginine to CASTOR1 disrupts the interaction of CASTOR2-containing heterodimers with GATOR2 which can in turn activate mTORC1 and the TORC1 signaling pathway.</text>
</comment>
<comment type="subunit">
    <text evidence="1">Forms homodimers and heterodimers with CASTOR1. Interacts with the GATOR2 complex which is composed of MIOS, SEC13, SEH1L, WDR24 and WDR59; the interaction is not regulated by arginine.</text>
</comment>
<comment type="subcellular location">
    <subcellularLocation>
        <location evidence="1">Cytoplasm</location>
        <location evidence="1">Cytosol</location>
    </subcellularLocation>
</comment>
<comment type="similarity">
    <text evidence="2">Belongs to the GATS family.</text>
</comment>
<gene>
    <name evidence="1" type="primary">Castor2</name>
    <name type="synonym">Gats</name>
    <name evidence="3" type="synonym">Gatsl2</name>
</gene>
<reference key="1">
    <citation type="submission" date="2000-10" db="EMBL/GenBank/DDBJ databases">
        <title>Cloning of cDNA encoding murine GATS protein.</title>
        <authorList>
            <person name="Perez-Jurado L."/>
            <person name="Pezzi N."/>
            <person name="Buesa J."/>
            <person name="Barbero J."/>
        </authorList>
    </citation>
    <scope>NUCLEOTIDE SEQUENCE [MRNA]</scope>
    <source>
        <tissue>Testis</tissue>
    </source>
</reference>
<reference key="2">
    <citation type="journal article" date="2005" name="Science">
        <title>The transcriptional landscape of the mammalian genome.</title>
        <authorList>
            <person name="Carninci P."/>
            <person name="Kasukawa T."/>
            <person name="Katayama S."/>
            <person name="Gough J."/>
            <person name="Frith M.C."/>
            <person name="Maeda N."/>
            <person name="Oyama R."/>
            <person name="Ravasi T."/>
            <person name="Lenhard B."/>
            <person name="Wells C."/>
            <person name="Kodzius R."/>
            <person name="Shimokawa K."/>
            <person name="Bajic V.B."/>
            <person name="Brenner S.E."/>
            <person name="Batalov S."/>
            <person name="Forrest A.R."/>
            <person name="Zavolan M."/>
            <person name="Davis M.J."/>
            <person name="Wilming L.G."/>
            <person name="Aidinis V."/>
            <person name="Allen J.E."/>
            <person name="Ambesi-Impiombato A."/>
            <person name="Apweiler R."/>
            <person name="Aturaliya R.N."/>
            <person name="Bailey T.L."/>
            <person name="Bansal M."/>
            <person name="Baxter L."/>
            <person name="Beisel K.W."/>
            <person name="Bersano T."/>
            <person name="Bono H."/>
            <person name="Chalk A.M."/>
            <person name="Chiu K.P."/>
            <person name="Choudhary V."/>
            <person name="Christoffels A."/>
            <person name="Clutterbuck D.R."/>
            <person name="Crowe M.L."/>
            <person name="Dalla E."/>
            <person name="Dalrymple B.P."/>
            <person name="de Bono B."/>
            <person name="Della Gatta G."/>
            <person name="di Bernardo D."/>
            <person name="Down T."/>
            <person name="Engstrom P."/>
            <person name="Fagiolini M."/>
            <person name="Faulkner G."/>
            <person name="Fletcher C.F."/>
            <person name="Fukushima T."/>
            <person name="Furuno M."/>
            <person name="Futaki S."/>
            <person name="Gariboldi M."/>
            <person name="Georgii-Hemming P."/>
            <person name="Gingeras T.R."/>
            <person name="Gojobori T."/>
            <person name="Green R.E."/>
            <person name="Gustincich S."/>
            <person name="Harbers M."/>
            <person name="Hayashi Y."/>
            <person name="Hensch T.K."/>
            <person name="Hirokawa N."/>
            <person name="Hill D."/>
            <person name="Huminiecki L."/>
            <person name="Iacono M."/>
            <person name="Ikeo K."/>
            <person name="Iwama A."/>
            <person name="Ishikawa T."/>
            <person name="Jakt M."/>
            <person name="Kanapin A."/>
            <person name="Katoh M."/>
            <person name="Kawasawa Y."/>
            <person name="Kelso J."/>
            <person name="Kitamura H."/>
            <person name="Kitano H."/>
            <person name="Kollias G."/>
            <person name="Krishnan S.P."/>
            <person name="Kruger A."/>
            <person name="Kummerfeld S.K."/>
            <person name="Kurochkin I.V."/>
            <person name="Lareau L.F."/>
            <person name="Lazarevic D."/>
            <person name="Lipovich L."/>
            <person name="Liu J."/>
            <person name="Liuni S."/>
            <person name="McWilliam S."/>
            <person name="Madan Babu M."/>
            <person name="Madera M."/>
            <person name="Marchionni L."/>
            <person name="Matsuda H."/>
            <person name="Matsuzawa S."/>
            <person name="Miki H."/>
            <person name="Mignone F."/>
            <person name="Miyake S."/>
            <person name="Morris K."/>
            <person name="Mottagui-Tabar S."/>
            <person name="Mulder N."/>
            <person name="Nakano N."/>
            <person name="Nakauchi H."/>
            <person name="Ng P."/>
            <person name="Nilsson R."/>
            <person name="Nishiguchi S."/>
            <person name="Nishikawa S."/>
            <person name="Nori F."/>
            <person name="Ohara O."/>
            <person name="Okazaki Y."/>
            <person name="Orlando V."/>
            <person name="Pang K.C."/>
            <person name="Pavan W.J."/>
            <person name="Pavesi G."/>
            <person name="Pesole G."/>
            <person name="Petrovsky N."/>
            <person name="Piazza S."/>
            <person name="Reed J."/>
            <person name="Reid J.F."/>
            <person name="Ring B.Z."/>
            <person name="Ringwald M."/>
            <person name="Rost B."/>
            <person name="Ruan Y."/>
            <person name="Salzberg S.L."/>
            <person name="Sandelin A."/>
            <person name="Schneider C."/>
            <person name="Schoenbach C."/>
            <person name="Sekiguchi K."/>
            <person name="Semple C.A."/>
            <person name="Seno S."/>
            <person name="Sessa L."/>
            <person name="Sheng Y."/>
            <person name="Shibata Y."/>
            <person name="Shimada H."/>
            <person name="Shimada K."/>
            <person name="Silva D."/>
            <person name="Sinclair B."/>
            <person name="Sperling S."/>
            <person name="Stupka E."/>
            <person name="Sugiura K."/>
            <person name="Sultana R."/>
            <person name="Takenaka Y."/>
            <person name="Taki K."/>
            <person name="Tammoja K."/>
            <person name="Tan S.L."/>
            <person name="Tang S."/>
            <person name="Taylor M.S."/>
            <person name="Tegner J."/>
            <person name="Teichmann S.A."/>
            <person name="Ueda H.R."/>
            <person name="van Nimwegen E."/>
            <person name="Verardo R."/>
            <person name="Wei C.L."/>
            <person name="Yagi K."/>
            <person name="Yamanishi H."/>
            <person name="Zabarovsky E."/>
            <person name="Zhu S."/>
            <person name="Zimmer A."/>
            <person name="Hide W."/>
            <person name="Bult C."/>
            <person name="Grimmond S.M."/>
            <person name="Teasdale R.D."/>
            <person name="Liu E.T."/>
            <person name="Brusic V."/>
            <person name="Quackenbush J."/>
            <person name="Wahlestedt C."/>
            <person name="Mattick J.S."/>
            <person name="Hume D.A."/>
            <person name="Kai C."/>
            <person name="Sasaki D."/>
            <person name="Tomaru Y."/>
            <person name="Fukuda S."/>
            <person name="Kanamori-Katayama M."/>
            <person name="Suzuki M."/>
            <person name="Aoki J."/>
            <person name="Arakawa T."/>
            <person name="Iida J."/>
            <person name="Imamura K."/>
            <person name="Itoh M."/>
            <person name="Kato T."/>
            <person name="Kawaji H."/>
            <person name="Kawagashira N."/>
            <person name="Kawashima T."/>
            <person name="Kojima M."/>
            <person name="Kondo S."/>
            <person name="Konno H."/>
            <person name="Nakano K."/>
            <person name="Ninomiya N."/>
            <person name="Nishio T."/>
            <person name="Okada M."/>
            <person name="Plessy C."/>
            <person name="Shibata K."/>
            <person name="Shiraki T."/>
            <person name="Suzuki S."/>
            <person name="Tagami M."/>
            <person name="Waki K."/>
            <person name="Watahiki A."/>
            <person name="Okamura-Oho Y."/>
            <person name="Suzuki H."/>
            <person name="Kawai J."/>
            <person name="Hayashizaki Y."/>
        </authorList>
    </citation>
    <scope>NUCLEOTIDE SEQUENCE [LARGE SCALE MRNA]</scope>
    <source>
        <strain>C57BL/6J</strain>
        <tissue>Heart</tissue>
        <tissue>Hypothalamus</tissue>
    </source>
</reference>
<reference key="3">
    <citation type="journal article" date="2004" name="Genome Res.">
        <title>The status, quality, and expansion of the NIH full-length cDNA project: the Mammalian Gene Collection (MGC).</title>
        <authorList>
            <consortium name="The MGC Project Team"/>
        </authorList>
    </citation>
    <scope>NUCLEOTIDE SEQUENCE [LARGE SCALE MRNA]</scope>
    <source>
        <strain>C57BL/6J</strain>
        <tissue>Brain</tissue>
    </source>
</reference>
<reference key="4">
    <citation type="journal article" date="2010" name="Cell">
        <title>A tissue-specific atlas of mouse protein phosphorylation and expression.</title>
        <authorList>
            <person name="Huttlin E.L."/>
            <person name="Jedrychowski M.P."/>
            <person name="Elias J.E."/>
            <person name="Goswami T."/>
            <person name="Rad R."/>
            <person name="Beausoleil S.A."/>
            <person name="Villen J."/>
            <person name="Haas W."/>
            <person name="Sowa M.E."/>
            <person name="Gygi S.P."/>
        </authorList>
    </citation>
    <scope>IDENTIFICATION BY MASS SPECTROMETRY [LARGE SCALE ANALYSIS]</scope>
    <source>
        <tissue>Brain</tissue>
    </source>
</reference>
<sequence length="329" mass="36112">MELHILEHRLQVASVAKESIPLFTYGLIKLAFLSSKTRCKFFSLTETPEDYTIIVDEEGFLELPSSEHLSVADATWLALNVVSGGGSFSSSQPIGVTKIAKSVIAPLADQNISVFMLSTYQTDFILVRERDLPFVTHTLSSEFTILRVVNGETVAAENLSFTNGFVKPKMVQRPVIHPLSSPSNRFCVTSLDPDTLPAVATLLMDVMFYSNGVKDPMAASDDCGHIRFFSFSLIEGYISLVMDVQTQQRFPSHLLFTSASGELWKMVRIGGQPLGFDECGIVAQISEPLAAADIPAYYISTFKFDHALVPEENISGVIHALKVSQAGKH</sequence>
<accession>Q8CAB8</accession>
<accession>Q8C7A9</accession>
<accession>Q9ER44</accession>
<organism>
    <name type="scientific">Mus musculus</name>
    <name type="common">Mouse</name>
    <dbReference type="NCBI Taxonomy" id="10090"/>
    <lineage>
        <taxon>Eukaryota</taxon>
        <taxon>Metazoa</taxon>
        <taxon>Chordata</taxon>
        <taxon>Craniata</taxon>
        <taxon>Vertebrata</taxon>
        <taxon>Euteleostomi</taxon>
        <taxon>Mammalia</taxon>
        <taxon>Eutheria</taxon>
        <taxon>Euarchontoglires</taxon>
        <taxon>Glires</taxon>
        <taxon>Rodentia</taxon>
        <taxon>Myomorpha</taxon>
        <taxon>Muroidea</taxon>
        <taxon>Muridae</taxon>
        <taxon>Murinae</taxon>
        <taxon>Mus</taxon>
        <taxon>Mus</taxon>
    </lineage>
</organism>
<keyword id="KW-0963">Cytoplasm</keyword>
<keyword id="KW-1185">Reference proteome</keyword>